<proteinExistence type="inferred from homology"/>
<keyword id="KW-0414">Isoprene biosynthesis</keyword>
<keyword id="KW-0456">Lyase</keyword>
<keyword id="KW-0479">Metal-binding</keyword>
<name>ISPF_PSEFS</name>
<sequence>MRIGHGYDVHRFAEGDFITLGGVRIAHHHGLLAHSDGDVVLHALSDALLGAAALGDIGKHFPDTDPTFKGADSRVLLRHVVGLIHAKGWKVGNVDNTIVAQAPKMAPHIESMRALIAADLQIELDQVNVKATTTEKLGFTGREEGIAVHSVALLLRA</sequence>
<organism>
    <name type="scientific">Pseudomonas fluorescens (strain SBW25)</name>
    <dbReference type="NCBI Taxonomy" id="216595"/>
    <lineage>
        <taxon>Bacteria</taxon>
        <taxon>Pseudomonadati</taxon>
        <taxon>Pseudomonadota</taxon>
        <taxon>Gammaproteobacteria</taxon>
        <taxon>Pseudomonadales</taxon>
        <taxon>Pseudomonadaceae</taxon>
        <taxon>Pseudomonas</taxon>
    </lineage>
</organism>
<protein>
    <recommendedName>
        <fullName evidence="1">2-C-methyl-D-erythritol 2,4-cyclodiphosphate synthase</fullName>
        <shortName evidence="1">MECDP-synthase</shortName>
        <shortName evidence="1">MECPP-synthase</shortName>
        <shortName evidence="1">MECPS</shortName>
        <ecNumber evidence="1">4.6.1.12</ecNumber>
    </recommendedName>
</protein>
<feature type="chain" id="PRO_1000202885" description="2-C-methyl-D-erythritol 2,4-cyclodiphosphate synthase">
    <location>
        <begin position="1"/>
        <end position="157"/>
    </location>
</feature>
<feature type="binding site" evidence="1">
    <location>
        <begin position="8"/>
        <end position="10"/>
    </location>
    <ligand>
        <name>4-CDP-2-C-methyl-D-erythritol 2-phosphate</name>
        <dbReference type="ChEBI" id="CHEBI:57919"/>
    </ligand>
</feature>
<feature type="binding site" evidence="1">
    <location>
        <position position="8"/>
    </location>
    <ligand>
        <name>a divalent metal cation</name>
        <dbReference type="ChEBI" id="CHEBI:60240"/>
    </ligand>
</feature>
<feature type="binding site" evidence="1">
    <location>
        <position position="10"/>
    </location>
    <ligand>
        <name>a divalent metal cation</name>
        <dbReference type="ChEBI" id="CHEBI:60240"/>
    </ligand>
</feature>
<feature type="binding site" evidence="1">
    <location>
        <begin position="34"/>
        <end position="35"/>
    </location>
    <ligand>
        <name>4-CDP-2-C-methyl-D-erythritol 2-phosphate</name>
        <dbReference type="ChEBI" id="CHEBI:57919"/>
    </ligand>
</feature>
<feature type="binding site" evidence="1">
    <location>
        <position position="42"/>
    </location>
    <ligand>
        <name>a divalent metal cation</name>
        <dbReference type="ChEBI" id="CHEBI:60240"/>
    </ligand>
</feature>
<feature type="binding site" evidence="1">
    <location>
        <begin position="56"/>
        <end position="58"/>
    </location>
    <ligand>
        <name>4-CDP-2-C-methyl-D-erythritol 2-phosphate</name>
        <dbReference type="ChEBI" id="CHEBI:57919"/>
    </ligand>
</feature>
<feature type="binding site" evidence="1">
    <location>
        <begin position="61"/>
        <end position="65"/>
    </location>
    <ligand>
        <name>4-CDP-2-C-methyl-D-erythritol 2-phosphate</name>
        <dbReference type="ChEBI" id="CHEBI:57919"/>
    </ligand>
</feature>
<feature type="binding site" evidence="1">
    <location>
        <begin position="100"/>
        <end position="106"/>
    </location>
    <ligand>
        <name>4-CDP-2-C-methyl-D-erythritol 2-phosphate</name>
        <dbReference type="ChEBI" id="CHEBI:57919"/>
    </ligand>
</feature>
<feature type="binding site" evidence="1">
    <location>
        <begin position="132"/>
        <end position="135"/>
    </location>
    <ligand>
        <name>4-CDP-2-C-methyl-D-erythritol 2-phosphate</name>
        <dbReference type="ChEBI" id="CHEBI:57919"/>
    </ligand>
</feature>
<feature type="binding site" evidence="1">
    <location>
        <position position="139"/>
    </location>
    <ligand>
        <name>4-CDP-2-C-methyl-D-erythritol 2-phosphate</name>
        <dbReference type="ChEBI" id="CHEBI:57919"/>
    </ligand>
</feature>
<feature type="binding site" evidence="1">
    <location>
        <position position="142"/>
    </location>
    <ligand>
        <name>4-CDP-2-C-methyl-D-erythritol 2-phosphate</name>
        <dbReference type="ChEBI" id="CHEBI:57919"/>
    </ligand>
</feature>
<feature type="site" description="Transition state stabilizer" evidence="1">
    <location>
        <position position="34"/>
    </location>
</feature>
<feature type="site" description="Transition state stabilizer" evidence="1">
    <location>
        <position position="133"/>
    </location>
</feature>
<gene>
    <name evidence="1" type="primary">ispF</name>
    <name type="ordered locus">PFLU_1297</name>
</gene>
<evidence type="ECO:0000255" key="1">
    <source>
        <dbReference type="HAMAP-Rule" id="MF_00107"/>
    </source>
</evidence>
<dbReference type="EC" id="4.6.1.12" evidence="1"/>
<dbReference type="EMBL" id="AM181176">
    <property type="protein sequence ID" value="CAY47553.1"/>
    <property type="molecule type" value="Genomic_DNA"/>
</dbReference>
<dbReference type="RefSeq" id="WP_012722614.1">
    <property type="nucleotide sequence ID" value="NC_012660.1"/>
</dbReference>
<dbReference type="SMR" id="C3K703"/>
<dbReference type="STRING" id="294.SRM1_01155"/>
<dbReference type="GeneID" id="93462913"/>
<dbReference type="eggNOG" id="COG0245">
    <property type="taxonomic scope" value="Bacteria"/>
</dbReference>
<dbReference type="HOGENOM" id="CLU_084630_2_0_6"/>
<dbReference type="OrthoDB" id="9804336at2"/>
<dbReference type="UniPathway" id="UPA00056">
    <property type="reaction ID" value="UER00095"/>
</dbReference>
<dbReference type="GO" id="GO:0008685">
    <property type="term" value="F:2-C-methyl-D-erythritol 2,4-cyclodiphosphate synthase activity"/>
    <property type="evidence" value="ECO:0007669"/>
    <property type="project" value="UniProtKB-UniRule"/>
</dbReference>
<dbReference type="GO" id="GO:0046872">
    <property type="term" value="F:metal ion binding"/>
    <property type="evidence" value="ECO:0007669"/>
    <property type="project" value="UniProtKB-KW"/>
</dbReference>
<dbReference type="GO" id="GO:0019288">
    <property type="term" value="P:isopentenyl diphosphate biosynthetic process, methylerythritol 4-phosphate pathway"/>
    <property type="evidence" value="ECO:0007669"/>
    <property type="project" value="UniProtKB-UniRule"/>
</dbReference>
<dbReference type="GO" id="GO:0016114">
    <property type="term" value="P:terpenoid biosynthetic process"/>
    <property type="evidence" value="ECO:0007669"/>
    <property type="project" value="InterPro"/>
</dbReference>
<dbReference type="CDD" id="cd00554">
    <property type="entry name" value="MECDP_synthase"/>
    <property type="match status" value="1"/>
</dbReference>
<dbReference type="FunFam" id="3.30.1330.50:FF:000001">
    <property type="entry name" value="2-C-methyl-D-erythritol 2,4-cyclodiphosphate synthase"/>
    <property type="match status" value="1"/>
</dbReference>
<dbReference type="Gene3D" id="3.30.1330.50">
    <property type="entry name" value="2-C-methyl-D-erythritol 2,4-cyclodiphosphate synthase"/>
    <property type="match status" value="1"/>
</dbReference>
<dbReference type="HAMAP" id="MF_00107">
    <property type="entry name" value="IspF"/>
    <property type="match status" value="1"/>
</dbReference>
<dbReference type="InterPro" id="IPR003526">
    <property type="entry name" value="MECDP_synthase"/>
</dbReference>
<dbReference type="InterPro" id="IPR020555">
    <property type="entry name" value="MECDP_synthase_CS"/>
</dbReference>
<dbReference type="InterPro" id="IPR036571">
    <property type="entry name" value="MECDP_synthase_sf"/>
</dbReference>
<dbReference type="NCBIfam" id="TIGR00151">
    <property type="entry name" value="ispF"/>
    <property type="match status" value="1"/>
</dbReference>
<dbReference type="PANTHER" id="PTHR43181">
    <property type="entry name" value="2-C-METHYL-D-ERYTHRITOL 2,4-CYCLODIPHOSPHATE SYNTHASE, CHLOROPLASTIC"/>
    <property type="match status" value="1"/>
</dbReference>
<dbReference type="PANTHER" id="PTHR43181:SF1">
    <property type="entry name" value="2-C-METHYL-D-ERYTHRITOL 2,4-CYCLODIPHOSPHATE SYNTHASE, CHLOROPLASTIC"/>
    <property type="match status" value="1"/>
</dbReference>
<dbReference type="Pfam" id="PF02542">
    <property type="entry name" value="YgbB"/>
    <property type="match status" value="1"/>
</dbReference>
<dbReference type="SUPFAM" id="SSF69765">
    <property type="entry name" value="IpsF-like"/>
    <property type="match status" value="1"/>
</dbReference>
<dbReference type="PROSITE" id="PS01350">
    <property type="entry name" value="ISPF"/>
    <property type="match status" value="1"/>
</dbReference>
<comment type="function">
    <text evidence="1">Involved in the biosynthesis of isopentenyl diphosphate (IPP) and dimethylallyl diphosphate (DMAPP), two major building blocks of isoprenoid compounds. Catalyzes the conversion of 4-diphosphocytidyl-2-C-methyl-D-erythritol 2-phosphate (CDP-ME2P) to 2-C-methyl-D-erythritol 2,4-cyclodiphosphate (ME-CPP) with a corresponding release of cytidine 5-monophosphate (CMP).</text>
</comment>
<comment type="catalytic activity">
    <reaction evidence="1">
        <text>4-CDP-2-C-methyl-D-erythritol 2-phosphate = 2-C-methyl-D-erythritol 2,4-cyclic diphosphate + CMP</text>
        <dbReference type="Rhea" id="RHEA:23864"/>
        <dbReference type="ChEBI" id="CHEBI:57919"/>
        <dbReference type="ChEBI" id="CHEBI:58483"/>
        <dbReference type="ChEBI" id="CHEBI:60377"/>
        <dbReference type="EC" id="4.6.1.12"/>
    </reaction>
</comment>
<comment type="cofactor">
    <cofactor evidence="1">
        <name>a divalent metal cation</name>
        <dbReference type="ChEBI" id="CHEBI:60240"/>
    </cofactor>
    <text evidence="1">Binds 1 divalent metal cation per subunit.</text>
</comment>
<comment type="pathway">
    <text evidence="1">Isoprenoid biosynthesis; isopentenyl diphosphate biosynthesis via DXP pathway; isopentenyl diphosphate from 1-deoxy-D-xylulose 5-phosphate: step 4/6.</text>
</comment>
<comment type="subunit">
    <text evidence="1">Homotrimer.</text>
</comment>
<comment type="similarity">
    <text evidence="1">Belongs to the IspF family.</text>
</comment>
<accession>C3K703</accession>
<reference key="1">
    <citation type="journal article" date="2009" name="Genome Biol.">
        <title>Genomic and genetic analyses of diversity and plant interactions of Pseudomonas fluorescens.</title>
        <authorList>
            <person name="Silby M.W."/>
            <person name="Cerdeno-Tarraga A.M."/>
            <person name="Vernikos G.S."/>
            <person name="Giddens S.R."/>
            <person name="Jackson R.W."/>
            <person name="Preston G.M."/>
            <person name="Zhang X.-X."/>
            <person name="Moon C.D."/>
            <person name="Gehrig S.M."/>
            <person name="Godfrey S.A.C."/>
            <person name="Knight C.G."/>
            <person name="Malone J.G."/>
            <person name="Robinson Z."/>
            <person name="Spiers A.J."/>
            <person name="Harris S."/>
            <person name="Challis G.L."/>
            <person name="Yaxley A.M."/>
            <person name="Harris D."/>
            <person name="Seeger K."/>
            <person name="Murphy L."/>
            <person name="Rutter S."/>
            <person name="Squares R."/>
            <person name="Quail M.A."/>
            <person name="Saunders E."/>
            <person name="Mavromatis K."/>
            <person name="Brettin T.S."/>
            <person name="Bentley S.D."/>
            <person name="Hothersall J."/>
            <person name="Stephens E."/>
            <person name="Thomas C.M."/>
            <person name="Parkhill J."/>
            <person name="Levy S.B."/>
            <person name="Rainey P.B."/>
            <person name="Thomson N.R."/>
        </authorList>
    </citation>
    <scope>NUCLEOTIDE SEQUENCE [LARGE SCALE GENOMIC DNA]</scope>
    <source>
        <strain>SBW25</strain>
    </source>
</reference>